<organism>
    <name type="scientific">Melecta albifrons</name>
    <name type="common">Cuckoo bee</name>
    <name type="synonym">Melecta punctata</name>
    <dbReference type="NCBI Taxonomy" id="582867"/>
    <lineage>
        <taxon>Eukaryota</taxon>
        <taxon>Metazoa</taxon>
        <taxon>Ecdysozoa</taxon>
        <taxon>Arthropoda</taxon>
        <taxon>Hexapoda</taxon>
        <taxon>Insecta</taxon>
        <taxon>Pterygota</taxon>
        <taxon>Neoptera</taxon>
        <taxon>Endopterygota</taxon>
        <taxon>Hymenoptera</taxon>
        <taxon>Apocrita</taxon>
        <taxon>Aculeata</taxon>
        <taxon>Apoidea</taxon>
        <taxon>Anthophila</taxon>
        <taxon>Apidae</taxon>
        <taxon>Melecta</taxon>
    </lineage>
</organism>
<evidence type="ECO:0000269" key="1">
    <source>
    </source>
</evidence>
<evidence type="ECO:0000303" key="2">
    <source>
    </source>
</evidence>
<evidence type="ECO:0000305" key="3"/>
<evidence type="ECO:0000305" key="4">
    <source>
    </source>
</evidence>
<keyword id="KW-0027">Amidation</keyword>
<keyword id="KW-0044">Antibiotic</keyword>
<keyword id="KW-0929">Antimicrobial</keyword>
<keyword id="KW-0204">Cytolysis</keyword>
<keyword id="KW-0903">Direct protein sequencing</keyword>
<keyword id="KW-0354">Hemolysis</keyword>
<keyword id="KW-0964">Secreted</keyword>
<sequence length="18" mass="2041">GFLSILKKVLPKVMAHMK</sequence>
<dbReference type="GO" id="GO:0005576">
    <property type="term" value="C:extracellular region"/>
    <property type="evidence" value="ECO:0000314"/>
    <property type="project" value="UniProtKB"/>
</dbReference>
<dbReference type="GO" id="GO:0050829">
    <property type="term" value="P:defense response to Gram-negative bacterium"/>
    <property type="evidence" value="ECO:0000314"/>
    <property type="project" value="UniProtKB"/>
</dbReference>
<dbReference type="GO" id="GO:0050830">
    <property type="term" value="P:defense response to Gram-positive bacterium"/>
    <property type="evidence" value="ECO:0000314"/>
    <property type="project" value="UniProtKB"/>
</dbReference>
<dbReference type="GO" id="GO:0044179">
    <property type="term" value="P:hemolysis in another organism"/>
    <property type="evidence" value="ECO:0000314"/>
    <property type="project" value="UniProtKB"/>
</dbReference>
<dbReference type="GO" id="GO:0044480">
    <property type="term" value="P:venom-mediated mast cell degranulation in another organism"/>
    <property type="evidence" value="ECO:0000314"/>
    <property type="project" value="UniProtKB"/>
</dbReference>
<name>MEP_MELAF</name>
<proteinExistence type="evidence at protein level"/>
<protein>
    <recommendedName>
        <fullName evidence="2">Melectin</fullName>
        <shortName evidence="2">MEP</shortName>
    </recommendedName>
</protein>
<comment type="function">
    <text evidence="1">Antimicrobial peptide with activity against Gram-positive bacteria (B.subtilis (MIC=0.8 uM) and S.aureus (MIC=6.8 uM)), and against Gram-negative bacteria (E.coli (MIC=2.0 uM) and P.aeruginosa (MIC=18.5 uM)) (PubMed:18942691). Stimulates degranulation from rat peritoneal mast cells (EC(50)=19.4 uM) (PubMed:18942691). Has very weak hemolytic activity towards rat erythrocytes (PubMed:18942691). In the context of inflammation and cancer tests, is weakly cytotoxic to normal cells, induces calcium signaling but does not impact cAMP production (PubMed:36548715). In addition, prevents LPS-induced nitric oxid (NO) synthesis but does not affect the IP3 signaling and pro-inflammatory activation of endothelial cells (PubMed:36548715). Does not show significant antiproliferative activity on the breast cancer cell line MDA-MB-231 (PubMed:36548715).</text>
</comment>
<comment type="subcellular location">
    <subcellularLocation>
        <location evidence="1">Secreted</location>
    </subcellularLocation>
</comment>
<comment type="tissue specificity">
    <text evidence="4">Expressed by the venom gland.</text>
</comment>
<comment type="mass spectrometry" mass="2038.24" method="Electrospray" evidence="1"/>
<comment type="similarity">
    <text evidence="3">Belongs to the xylopin-like family.</text>
</comment>
<accession>P86170</accession>
<feature type="peptide" id="PRO_0000363945" description="Melectin" evidence="1">
    <location>
        <begin position="1"/>
        <end position="18"/>
    </location>
</feature>
<feature type="modified residue" description="Lysine amide" evidence="1">
    <location>
        <position position="18"/>
    </location>
</feature>
<reference evidence="3" key="1">
    <citation type="journal article" date="2008" name="ChemBioChem">
        <title>Melectin: a novel antimicrobial peptide from the venom of the cleptoparasitic bee Melecta albifrons.</title>
        <authorList>
            <person name="Cerovsky V."/>
            <person name="Hovorka O."/>
            <person name="Cvacka J."/>
            <person name="Voburka Z."/>
            <person name="Bednarova L."/>
            <person name="Borovickova L."/>
            <person name="Slaninova J."/>
            <person name="Fucik V."/>
        </authorList>
    </citation>
    <scope>PROTEIN SEQUENCE</scope>
    <scope>FUNCTION</scope>
    <scope>SUBCELLULAR LOCATION</scope>
    <scope>MASS SPECTROMETRY</scope>
    <scope>AMIDATION AT LYS-18</scope>
    <source>
        <tissue evidence="1">Venom</tissue>
    </source>
</reference>
<reference key="2">
    <citation type="journal article" date="2022" name="Toxins">
        <title>The pharmacological potential of novel melittin variants from the honeybee and solitary bees against inflammation and cancer.</title>
        <authorList>
            <person name="Erkoc P."/>
            <person name="von Reumont B.M."/>
            <person name="Lueddecke T."/>
            <person name="Henke M."/>
            <person name="Ulshoefer T."/>
            <person name="Vilcinskas A."/>
            <person name="Fuerst R."/>
            <person name="Schiffmann S."/>
        </authorList>
    </citation>
    <scope>FUNCTION</scope>
</reference>